<accession>Q7NKL3</accession>
<protein>
    <recommendedName>
        <fullName evidence="1">Epoxyqueuosine reductase</fullName>
        <ecNumber evidence="1">1.17.99.6</ecNumber>
    </recommendedName>
    <alternativeName>
        <fullName evidence="1">Queuosine biosynthesis protein QueG</fullName>
    </alternativeName>
</protein>
<gene>
    <name evidence="1" type="primary">queG</name>
    <name type="ordered locus">gll1464</name>
</gene>
<organism>
    <name type="scientific">Gloeobacter violaceus (strain ATCC 29082 / PCC 7421)</name>
    <dbReference type="NCBI Taxonomy" id="251221"/>
    <lineage>
        <taxon>Bacteria</taxon>
        <taxon>Bacillati</taxon>
        <taxon>Cyanobacteriota</taxon>
        <taxon>Cyanophyceae</taxon>
        <taxon>Gloeobacterales</taxon>
        <taxon>Gloeobacteraceae</taxon>
        <taxon>Gloeobacter</taxon>
    </lineage>
</organism>
<reference key="1">
    <citation type="journal article" date="2003" name="DNA Res.">
        <title>Complete genome structure of Gloeobacter violaceus PCC 7421, a cyanobacterium that lacks thylakoids.</title>
        <authorList>
            <person name="Nakamura Y."/>
            <person name="Kaneko T."/>
            <person name="Sato S."/>
            <person name="Mimuro M."/>
            <person name="Miyashita H."/>
            <person name="Tsuchiya T."/>
            <person name="Sasamoto S."/>
            <person name="Watanabe A."/>
            <person name="Kawashima K."/>
            <person name="Kishida Y."/>
            <person name="Kiyokawa C."/>
            <person name="Kohara M."/>
            <person name="Matsumoto M."/>
            <person name="Matsuno A."/>
            <person name="Nakazaki N."/>
            <person name="Shimpo S."/>
            <person name="Takeuchi C."/>
            <person name="Yamada M."/>
            <person name="Tabata S."/>
        </authorList>
    </citation>
    <scope>NUCLEOTIDE SEQUENCE [LARGE SCALE GENOMIC DNA]</scope>
    <source>
        <strain>ATCC 29082 / PCC 7421</strain>
    </source>
</reference>
<sequence>MAPTAAQIKSRARALGFHKVGIARADALDGEAAERLGGWLAAGYAGEMRWMHDPRRRDIQQVLPGVRSVICVALSYNTAQGEPAPGQARISRYALGRDYHKVLGKPLKELARWIEASDPGCRAVAYVDTGPVQEKAWAEAAGLGWIGKNACLITLEYGSWVFLGEILTTLDLEANDPHPNYCGTCTRCLSACPTAALVEPAVVDARKCLAYHTIENRAPELPEAIAEHQHGWVVGCDLCQTCCPFNLRAERWGRYSEVADFAPRDPWNEITLDQLADLSDAEFERWSEGSAIRRVKASGLRRNARSALGASGDSLAQAH</sequence>
<proteinExistence type="inferred from homology"/>
<comment type="function">
    <text evidence="1">Catalyzes the conversion of epoxyqueuosine (oQ) to queuosine (Q), which is a hypermodified base found in the wobble positions of tRNA(Asp), tRNA(Asn), tRNA(His) and tRNA(Tyr).</text>
</comment>
<comment type="catalytic activity">
    <reaction evidence="1">
        <text>epoxyqueuosine(34) in tRNA + AH2 = queuosine(34) in tRNA + A + H2O</text>
        <dbReference type="Rhea" id="RHEA:32159"/>
        <dbReference type="Rhea" id="RHEA-COMP:18571"/>
        <dbReference type="Rhea" id="RHEA-COMP:18582"/>
        <dbReference type="ChEBI" id="CHEBI:13193"/>
        <dbReference type="ChEBI" id="CHEBI:15377"/>
        <dbReference type="ChEBI" id="CHEBI:17499"/>
        <dbReference type="ChEBI" id="CHEBI:194431"/>
        <dbReference type="ChEBI" id="CHEBI:194443"/>
        <dbReference type="EC" id="1.17.99.6"/>
    </reaction>
</comment>
<comment type="cofactor">
    <cofactor evidence="1">
        <name>cob(II)alamin</name>
        <dbReference type="ChEBI" id="CHEBI:16304"/>
    </cofactor>
</comment>
<comment type="cofactor">
    <cofactor evidence="1">
        <name>[4Fe-4S] cluster</name>
        <dbReference type="ChEBI" id="CHEBI:49883"/>
    </cofactor>
    <text evidence="1">Binds 2 [4Fe-4S] clusters per monomer.</text>
</comment>
<comment type="pathway">
    <text evidence="1">tRNA modification; tRNA-queuosine biosynthesis.</text>
</comment>
<comment type="subunit">
    <text evidence="1">Monomer.</text>
</comment>
<comment type="subcellular location">
    <subcellularLocation>
        <location evidence="1">Cytoplasm</location>
    </subcellularLocation>
</comment>
<comment type="similarity">
    <text evidence="1">Belongs to the QueG family.</text>
</comment>
<feature type="chain" id="PRO_0000416072" description="Epoxyqueuosine reductase">
    <location>
        <begin position="1"/>
        <end position="319"/>
    </location>
</feature>
<feature type="domain" description="4Fe-4S ferredoxin-type" evidence="1">
    <location>
        <begin position="173"/>
        <end position="202"/>
    </location>
</feature>
<feature type="active site" description="Proton donor" evidence="1">
    <location>
        <position position="128"/>
    </location>
</feature>
<feature type="binding site" evidence="1">
    <location>
        <position position="182"/>
    </location>
    <ligand>
        <name>[4Fe-4S] cluster</name>
        <dbReference type="ChEBI" id="CHEBI:49883"/>
        <label>1</label>
    </ligand>
</feature>
<feature type="binding site" evidence="1">
    <location>
        <position position="185"/>
    </location>
    <ligand>
        <name>[4Fe-4S] cluster</name>
        <dbReference type="ChEBI" id="CHEBI:49883"/>
        <label>1</label>
    </ligand>
</feature>
<feature type="binding site" evidence="1">
    <location>
        <position position="188"/>
    </location>
    <ligand>
        <name>[4Fe-4S] cluster</name>
        <dbReference type="ChEBI" id="CHEBI:49883"/>
        <label>1</label>
    </ligand>
</feature>
<feature type="binding site" evidence="1">
    <location>
        <position position="192"/>
    </location>
    <ligand>
        <name>[4Fe-4S] cluster</name>
        <dbReference type="ChEBI" id="CHEBI:49883"/>
        <label>2</label>
    </ligand>
</feature>
<feature type="binding site" evidence="1">
    <location>
        <position position="208"/>
    </location>
    <ligand>
        <name>[4Fe-4S] cluster</name>
        <dbReference type="ChEBI" id="CHEBI:49883"/>
        <label>2</label>
    </ligand>
</feature>
<feature type="binding site" evidence="1">
    <location>
        <position position="236"/>
    </location>
    <ligand>
        <name>[4Fe-4S] cluster</name>
        <dbReference type="ChEBI" id="CHEBI:49883"/>
        <label>2</label>
    </ligand>
</feature>
<feature type="binding site" evidence="1">
    <location>
        <position position="239"/>
    </location>
    <ligand>
        <name>[4Fe-4S] cluster</name>
        <dbReference type="ChEBI" id="CHEBI:49883"/>
        <label>2</label>
    </ligand>
</feature>
<feature type="binding site" evidence="1">
    <location>
        <position position="243"/>
    </location>
    <ligand>
        <name>[4Fe-4S] cluster</name>
        <dbReference type="ChEBI" id="CHEBI:49883"/>
        <label>1</label>
    </ligand>
</feature>
<name>QUEG_GLOVI</name>
<dbReference type="EC" id="1.17.99.6" evidence="1"/>
<dbReference type="EMBL" id="BA000045">
    <property type="protein sequence ID" value="BAC89405.1"/>
    <property type="molecule type" value="Genomic_DNA"/>
</dbReference>
<dbReference type="RefSeq" id="NP_924410.1">
    <property type="nucleotide sequence ID" value="NC_005125.1"/>
</dbReference>
<dbReference type="RefSeq" id="WP_011141464.1">
    <property type="nucleotide sequence ID" value="NC_005125.1"/>
</dbReference>
<dbReference type="SMR" id="Q7NKL3"/>
<dbReference type="STRING" id="251221.gene:10758953"/>
<dbReference type="EnsemblBacteria" id="BAC89405">
    <property type="protein sequence ID" value="BAC89405"/>
    <property type="gene ID" value="BAC89405"/>
</dbReference>
<dbReference type="KEGG" id="gvi:gll1464"/>
<dbReference type="PATRIC" id="fig|251221.4.peg.1496"/>
<dbReference type="eggNOG" id="COG1600">
    <property type="taxonomic scope" value="Bacteria"/>
</dbReference>
<dbReference type="HOGENOM" id="CLU_030790_0_0_3"/>
<dbReference type="InParanoid" id="Q7NKL3"/>
<dbReference type="OrthoDB" id="9784571at2"/>
<dbReference type="PhylomeDB" id="Q7NKL3"/>
<dbReference type="UniPathway" id="UPA00392"/>
<dbReference type="Proteomes" id="UP000000557">
    <property type="component" value="Chromosome"/>
</dbReference>
<dbReference type="GO" id="GO:0005737">
    <property type="term" value="C:cytoplasm"/>
    <property type="evidence" value="ECO:0007669"/>
    <property type="project" value="UniProtKB-SubCell"/>
</dbReference>
<dbReference type="GO" id="GO:0051539">
    <property type="term" value="F:4 iron, 4 sulfur cluster binding"/>
    <property type="evidence" value="ECO:0007669"/>
    <property type="project" value="UniProtKB-KW"/>
</dbReference>
<dbReference type="GO" id="GO:0052693">
    <property type="term" value="F:epoxyqueuosine reductase activity"/>
    <property type="evidence" value="ECO:0000318"/>
    <property type="project" value="GO_Central"/>
</dbReference>
<dbReference type="GO" id="GO:0046872">
    <property type="term" value="F:metal ion binding"/>
    <property type="evidence" value="ECO:0007669"/>
    <property type="project" value="UniProtKB-KW"/>
</dbReference>
<dbReference type="GO" id="GO:0008616">
    <property type="term" value="P:queuosine biosynthetic process"/>
    <property type="evidence" value="ECO:0000318"/>
    <property type="project" value="GO_Central"/>
</dbReference>
<dbReference type="GO" id="GO:0006400">
    <property type="term" value="P:tRNA modification"/>
    <property type="evidence" value="ECO:0007669"/>
    <property type="project" value="UniProtKB-UniRule"/>
</dbReference>
<dbReference type="HAMAP" id="MF_00916">
    <property type="entry name" value="QueG"/>
    <property type="match status" value="1"/>
</dbReference>
<dbReference type="InterPro" id="IPR017896">
    <property type="entry name" value="4Fe4S_Fe-S-bd"/>
</dbReference>
<dbReference type="InterPro" id="IPR017900">
    <property type="entry name" value="4Fe4S_Fe_S_CS"/>
</dbReference>
<dbReference type="InterPro" id="IPR004453">
    <property type="entry name" value="QueG"/>
</dbReference>
<dbReference type="InterPro" id="IPR013542">
    <property type="entry name" value="QueG_DUF1730"/>
</dbReference>
<dbReference type="NCBIfam" id="TIGR00276">
    <property type="entry name" value="tRNA epoxyqueuosine(34) reductase QueG"/>
    <property type="match status" value="1"/>
</dbReference>
<dbReference type="PANTHER" id="PTHR30002">
    <property type="entry name" value="EPOXYQUEUOSINE REDUCTASE"/>
    <property type="match status" value="1"/>
</dbReference>
<dbReference type="PANTHER" id="PTHR30002:SF4">
    <property type="entry name" value="EPOXYQUEUOSINE REDUCTASE"/>
    <property type="match status" value="1"/>
</dbReference>
<dbReference type="Pfam" id="PF13484">
    <property type="entry name" value="Fer4_16"/>
    <property type="match status" value="1"/>
</dbReference>
<dbReference type="Pfam" id="PF08331">
    <property type="entry name" value="QueG_DUF1730"/>
    <property type="match status" value="1"/>
</dbReference>
<dbReference type="SUPFAM" id="SSF46548">
    <property type="entry name" value="alpha-helical ferredoxin"/>
    <property type="match status" value="1"/>
</dbReference>
<dbReference type="PROSITE" id="PS00198">
    <property type="entry name" value="4FE4S_FER_1"/>
    <property type="match status" value="1"/>
</dbReference>
<dbReference type="PROSITE" id="PS51379">
    <property type="entry name" value="4FE4S_FER_2"/>
    <property type="match status" value="1"/>
</dbReference>
<evidence type="ECO:0000255" key="1">
    <source>
        <dbReference type="HAMAP-Rule" id="MF_00916"/>
    </source>
</evidence>
<keyword id="KW-0004">4Fe-4S</keyword>
<keyword id="KW-0963">Cytoplasm</keyword>
<keyword id="KW-0408">Iron</keyword>
<keyword id="KW-0411">Iron-sulfur</keyword>
<keyword id="KW-0479">Metal-binding</keyword>
<keyword id="KW-0560">Oxidoreductase</keyword>
<keyword id="KW-0671">Queuosine biosynthesis</keyword>
<keyword id="KW-1185">Reference proteome</keyword>
<keyword id="KW-0819">tRNA processing</keyword>